<name>EFP_MANSM</name>
<reference key="1">
    <citation type="journal article" date="2004" name="Nat. Biotechnol.">
        <title>The genome sequence of the capnophilic rumen bacterium Mannheimia succiniciproducens.</title>
        <authorList>
            <person name="Hong S.H."/>
            <person name="Kim J.S."/>
            <person name="Lee S.Y."/>
            <person name="In Y.H."/>
            <person name="Choi S.S."/>
            <person name="Rih J.-K."/>
            <person name="Kim C.H."/>
            <person name="Jeong H."/>
            <person name="Hur C.G."/>
            <person name="Kim J.J."/>
        </authorList>
    </citation>
    <scope>NUCLEOTIDE SEQUENCE [LARGE SCALE GENOMIC DNA]</scope>
    <source>
        <strain>KCTC 0769BP / MBEL55E</strain>
    </source>
</reference>
<keyword id="KW-0963">Cytoplasm</keyword>
<keyword id="KW-0251">Elongation factor</keyword>
<keyword id="KW-0379">Hydroxylation</keyword>
<keyword id="KW-0648">Protein biosynthesis</keyword>
<sequence length="192" mass="21215">MRIIMATYTTSDFKPGLKFMQDGEPCVIVENEFVKPGKGQAFTRTRIRKLISGKVLDVNFKSGTSVEAADVMDLNLNYSYKDEDFWYFMHPETFEQYSADSKAVGDAEKWLLDQAECIITLWNGSPISVTPPNFVELEVVDTDPGLKGDTAGTGGKPATLSTGAVVKVPLFIQIGEVIKVDTRSGEYVSRVK</sequence>
<proteinExistence type="inferred from homology"/>
<organism>
    <name type="scientific">Mannheimia succiniciproducens (strain KCTC 0769BP / MBEL55E)</name>
    <dbReference type="NCBI Taxonomy" id="221988"/>
    <lineage>
        <taxon>Bacteria</taxon>
        <taxon>Pseudomonadati</taxon>
        <taxon>Pseudomonadota</taxon>
        <taxon>Gammaproteobacteria</taxon>
        <taxon>Pasteurellales</taxon>
        <taxon>Pasteurellaceae</taxon>
        <taxon>Basfia</taxon>
    </lineage>
</organism>
<evidence type="ECO:0000255" key="1">
    <source>
        <dbReference type="HAMAP-Rule" id="MF_00141"/>
    </source>
</evidence>
<accession>Q65V95</accession>
<comment type="function">
    <text evidence="1">Involved in peptide bond synthesis. Alleviates ribosome stalling that occurs when 3 or more consecutive Pro residues or the sequence PPG is present in a protein, possibly by augmenting the peptidyl transferase activity of the ribosome. Modification of Lys-38 is required for alleviation.</text>
</comment>
<comment type="pathway">
    <text evidence="1">Protein biosynthesis; polypeptide chain elongation.</text>
</comment>
<comment type="subcellular location">
    <subcellularLocation>
        <location evidence="1">Cytoplasm</location>
    </subcellularLocation>
</comment>
<comment type="PTM">
    <text evidence="1">May be beta-lysylated on the epsilon-amino group of Lys-38 by the combined action of EpmA and EpmB, and then hydroxylated on the C5 position of the same residue by EpmC (if this protein is present). Lysylation is critical for the stimulatory effect of EF-P on peptide-bond formation. The lysylation moiety may extend toward the peptidyltransferase center and stabilize the terminal 3-CCA end of the tRNA. Hydroxylation of the C5 position on Lys-38 may allow additional potential stabilizing hydrogen-bond interactions with the P-tRNA.</text>
</comment>
<comment type="similarity">
    <text evidence="1">Belongs to the elongation factor P family.</text>
</comment>
<dbReference type="EMBL" id="AE016827">
    <property type="protein sequence ID" value="AAU37115.1"/>
    <property type="molecule type" value="Genomic_DNA"/>
</dbReference>
<dbReference type="SMR" id="Q65V95"/>
<dbReference type="STRING" id="221988.MS0508"/>
<dbReference type="KEGG" id="msu:MS0508"/>
<dbReference type="eggNOG" id="COG0231">
    <property type="taxonomic scope" value="Bacteria"/>
</dbReference>
<dbReference type="HOGENOM" id="CLU_074944_0_0_6"/>
<dbReference type="UniPathway" id="UPA00345"/>
<dbReference type="Proteomes" id="UP000000607">
    <property type="component" value="Chromosome"/>
</dbReference>
<dbReference type="GO" id="GO:0005737">
    <property type="term" value="C:cytoplasm"/>
    <property type="evidence" value="ECO:0007669"/>
    <property type="project" value="UniProtKB-SubCell"/>
</dbReference>
<dbReference type="GO" id="GO:0003746">
    <property type="term" value="F:translation elongation factor activity"/>
    <property type="evidence" value="ECO:0007669"/>
    <property type="project" value="UniProtKB-UniRule"/>
</dbReference>
<dbReference type="GO" id="GO:0043043">
    <property type="term" value="P:peptide biosynthetic process"/>
    <property type="evidence" value="ECO:0007669"/>
    <property type="project" value="InterPro"/>
</dbReference>
<dbReference type="CDD" id="cd04470">
    <property type="entry name" value="S1_EF-P_repeat_1"/>
    <property type="match status" value="1"/>
</dbReference>
<dbReference type="CDD" id="cd05794">
    <property type="entry name" value="S1_EF-P_repeat_2"/>
    <property type="match status" value="1"/>
</dbReference>
<dbReference type="FunFam" id="2.30.30.30:FF:000003">
    <property type="entry name" value="Elongation factor P"/>
    <property type="match status" value="1"/>
</dbReference>
<dbReference type="FunFam" id="2.40.50.140:FF:000004">
    <property type="entry name" value="Elongation factor P"/>
    <property type="match status" value="1"/>
</dbReference>
<dbReference type="FunFam" id="2.40.50.140:FF:000009">
    <property type="entry name" value="Elongation factor P"/>
    <property type="match status" value="1"/>
</dbReference>
<dbReference type="Gene3D" id="2.30.30.30">
    <property type="match status" value="1"/>
</dbReference>
<dbReference type="Gene3D" id="2.40.50.140">
    <property type="entry name" value="Nucleic acid-binding proteins"/>
    <property type="match status" value="2"/>
</dbReference>
<dbReference type="HAMAP" id="MF_00141">
    <property type="entry name" value="EF_P"/>
    <property type="match status" value="1"/>
</dbReference>
<dbReference type="InterPro" id="IPR015365">
    <property type="entry name" value="Elong-fact-P_C"/>
</dbReference>
<dbReference type="InterPro" id="IPR012340">
    <property type="entry name" value="NA-bd_OB-fold"/>
</dbReference>
<dbReference type="InterPro" id="IPR014722">
    <property type="entry name" value="Rib_uL2_dom2"/>
</dbReference>
<dbReference type="InterPro" id="IPR020599">
    <property type="entry name" value="Transl_elong_fac_P/YeiP"/>
</dbReference>
<dbReference type="InterPro" id="IPR013185">
    <property type="entry name" value="Transl_elong_KOW-like"/>
</dbReference>
<dbReference type="InterPro" id="IPR001059">
    <property type="entry name" value="Transl_elong_P/YeiP_cen"/>
</dbReference>
<dbReference type="InterPro" id="IPR013852">
    <property type="entry name" value="Transl_elong_P/YeiP_CS"/>
</dbReference>
<dbReference type="InterPro" id="IPR011768">
    <property type="entry name" value="Transl_elongation_fac_P"/>
</dbReference>
<dbReference type="InterPro" id="IPR008991">
    <property type="entry name" value="Translation_prot_SH3-like_sf"/>
</dbReference>
<dbReference type="NCBIfam" id="TIGR00038">
    <property type="entry name" value="efp"/>
    <property type="match status" value="1"/>
</dbReference>
<dbReference type="NCBIfam" id="NF001810">
    <property type="entry name" value="PRK00529.1"/>
    <property type="match status" value="1"/>
</dbReference>
<dbReference type="PANTHER" id="PTHR30053">
    <property type="entry name" value="ELONGATION FACTOR P"/>
    <property type="match status" value="1"/>
</dbReference>
<dbReference type="PANTHER" id="PTHR30053:SF12">
    <property type="entry name" value="ELONGATION FACTOR P (EF-P) FAMILY PROTEIN"/>
    <property type="match status" value="1"/>
</dbReference>
<dbReference type="Pfam" id="PF01132">
    <property type="entry name" value="EFP"/>
    <property type="match status" value="1"/>
</dbReference>
<dbReference type="Pfam" id="PF08207">
    <property type="entry name" value="EFP_N"/>
    <property type="match status" value="1"/>
</dbReference>
<dbReference type="Pfam" id="PF09285">
    <property type="entry name" value="Elong-fact-P_C"/>
    <property type="match status" value="1"/>
</dbReference>
<dbReference type="PIRSF" id="PIRSF005901">
    <property type="entry name" value="EF-P"/>
    <property type="match status" value="1"/>
</dbReference>
<dbReference type="SMART" id="SM01185">
    <property type="entry name" value="EFP"/>
    <property type="match status" value="1"/>
</dbReference>
<dbReference type="SMART" id="SM00841">
    <property type="entry name" value="Elong-fact-P_C"/>
    <property type="match status" value="1"/>
</dbReference>
<dbReference type="SUPFAM" id="SSF50249">
    <property type="entry name" value="Nucleic acid-binding proteins"/>
    <property type="match status" value="2"/>
</dbReference>
<dbReference type="SUPFAM" id="SSF50104">
    <property type="entry name" value="Translation proteins SH3-like domain"/>
    <property type="match status" value="1"/>
</dbReference>
<dbReference type="PROSITE" id="PS01275">
    <property type="entry name" value="EFP"/>
    <property type="match status" value="1"/>
</dbReference>
<protein>
    <recommendedName>
        <fullName evidence="1">Elongation factor P</fullName>
        <shortName evidence="1">EF-P</shortName>
    </recommendedName>
</protein>
<gene>
    <name evidence="1" type="primary">efp</name>
    <name type="ordered locus">MS0508</name>
</gene>
<feature type="chain" id="PRO_0000094278" description="Elongation factor P">
    <location>
        <begin position="1"/>
        <end position="192"/>
    </location>
</feature>
<feature type="modified residue" description="N6-(3,6-diaminohexanoyl)-5-hydroxylysine" evidence="1">
    <location>
        <position position="38"/>
    </location>
</feature>